<evidence type="ECO:0000255" key="1">
    <source>
        <dbReference type="HAMAP-Rule" id="MF_00033"/>
    </source>
</evidence>
<dbReference type="EC" id="2.4.1.227" evidence="1"/>
<dbReference type="EMBL" id="CP000386">
    <property type="protein sequence ID" value="ABG04455.1"/>
    <property type="molecule type" value="Genomic_DNA"/>
</dbReference>
<dbReference type="SMR" id="Q1AVX3"/>
<dbReference type="STRING" id="266117.Rxyl_1493"/>
<dbReference type="CAZy" id="GT28">
    <property type="family name" value="Glycosyltransferase Family 28"/>
</dbReference>
<dbReference type="KEGG" id="rxy:Rxyl_1493"/>
<dbReference type="eggNOG" id="COG0707">
    <property type="taxonomic scope" value="Bacteria"/>
</dbReference>
<dbReference type="HOGENOM" id="CLU_037404_0_1_11"/>
<dbReference type="PhylomeDB" id="Q1AVX3"/>
<dbReference type="UniPathway" id="UPA00219"/>
<dbReference type="Proteomes" id="UP000006637">
    <property type="component" value="Chromosome"/>
</dbReference>
<dbReference type="GO" id="GO:0005886">
    <property type="term" value="C:plasma membrane"/>
    <property type="evidence" value="ECO:0007669"/>
    <property type="project" value="UniProtKB-SubCell"/>
</dbReference>
<dbReference type="GO" id="GO:0051991">
    <property type="term" value="F:UDP-N-acetyl-D-glucosamine:N-acetylmuramoyl-L-alanyl-D-glutamyl-meso-2,6-diaminopimelyl-D-alanyl-D-alanine-diphosphoundecaprenol 4-beta-N-acetylglucosaminlytransferase activity"/>
    <property type="evidence" value="ECO:0007669"/>
    <property type="project" value="RHEA"/>
</dbReference>
<dbReference type="GO" id="GO:0050511">
    <property type="term" value="F:undecaprenyldiphospho-muramoylpentapeptide beta-N-acetylglucosaminyltransferase activity"/>
    <property type="evidence" value="ECO:0007669"/>
    <property type="project" value="UniProtKB-UniRule"/>
</dbReference>
<dbReference type="GO" id="GO:0005975">
    <property type="term" value="P:carbohydrate metabolic process"/>
    <property type="evidence" value="ECO:0007669"/>
    <property type="project" value="InterPro"/>
</dbReference>
<dbReference type="GO" id="GO:0051301">
    <property type="term" value="P:cell division"/>
    <property type="evidence" value="ECO:0007669"/>
    <property type="project" value="UniProtKB-KW"/>
</dbReference>
<dbReference type="GO" id="GO:0071555">
    <property type="term" value="P:cell wall organization"/>
    <property type="evidence" value="ECO:0007669"/>
    <property type="project" value="UniProtKB-KW"/>
</dbReference>
<dbReference type="GO" id="GO:0030259">
    <property type="term" value="P:lipid glycosylation"/>
    <property type="evidence" value="ECO:0007669"/>
    <property type="project" value="UniProtKB-UniRule"/>
</dbReference>
<dbReference type="GO" id="GO:0009252">
    <property type="term" value="P:peptidoglycan biosynthetic process"/>
    <property type="evidence" value="ECO:0007669"/>
    <property type="project" value="UniProtKB-UniRule"/>
</dbReference>
<dbReference type="GO" id="GO:0008360">
    <property type="term" value="P:regulation of cell shape"/>
    <property type="evidence" value="ECO:0007669"/>
    <property type="project" value="UniProtKB-KW"/>
</dbReference>
<dbReference type="CDD" id="cd03785">
    <property type="entry name" value="GT28_MurG"/>
    <property type="match status" value="1"/>
</dbReference>
<dbReference type="Gene3D" id="3.40.50.2000">
    <property type="entry name" value="Glycogen Phosphorylase B"/>
    <property type="match status" value="2"/>
</dbReference>
<dbReference type="HAMAP" id="MF_00033">
    <property type="entry name" value="MurG"/>
    <property type="match status" value="1"/>
</dbReference>
<dbReference type="InterPro" id="IPR006009">
    <property type="entry name" value="GlcNAc_MurG"/>
</dbReference>
<dbReference type="InterPro" id="IPR007235">
    <property type="entry name" value="Glyco_trans_28_C"/>
</dbReference>
<dbReference type="InterPro" id="IPR004276">
    <property type="entry name" value="GlycoTrans_28_N"/>
</dbReference>
<dbReference type="PANTHER" id="PTHR21015:SF22">
    <property type="entry name" value="GLYCOSYLTRANSFERASE"/>
    <property type="match status" value="1"/>
</dbReference>
<dbReference type="PANTHER" id="PTHR21015">
    <property type="entry name" value="UDP-N-ACETYLGLUCOSAMINE--N-ACETYLMURAMYL-(PENTAPEPTIDE) PYROPHOSPHORYL-UNDECAPRENOL N-ACETYLGLUCOSAMINE TRANSFERASE 1"/>
    <property type="match status" value="1"/>
</dbReference>
<dbReference type="Pfam" id="PF04101">
    <property type="entry name" value="Glyco_tran_28_C"/>
    <property type="match status" value="1"/>
</dbReference>
<dbReference type="Pfam" id="PF03033">
    <property type="entry name" value="Glyco_transf_28"/>
    <property type="match status" value="1"/>
</dbReference>
<dbReference type="SUPFAM" id="SSF53756">
    <property type="entry name" value="UDP-Glycosyltransferase/glycogen phosphorylase"/>
    <property type="match status" value="1"/>
</dbReference>
<protein>
    <recommendedName>
        <fullName evidence="1">UDP-N-acetylglucosamine--N-acetylmuramyl-(pentapeptide) pyrophosphoryl-undecaprenol N-acetylglucosamine transferase</fullName>
        <ecNumber evidence="1">2.4.1.227</ecNumber>
    </recommendedName>
    <alternativeName>
        <fullName evidence="1">Undecaprenyl-PP-MurNAc-pentapeptide-UDPGlcNAc GlcNAc transferase</fullName>
    </alternativeName>
</protein>
<accession>Q1AVX3</accession>
<name>MURG_RUBXD</name>
<keyword id="KW-0131">Cell cycle</keyword>
<keyword id="KW-0132">Cell division</keyword>
<keyword id="KW-1003">Cell membrane</keyword>
<keyword id="KW-0133">Cell shape</keyword>
<keyword id="KW-0961">Cell wall biogenesis/degradation</keyword>
<keyword id="KW-0328">Glycosyltransferase</keyword>
<keyword id="KW-0472">Membrane</keyword>
<keyword id="KW-0573">Peptidoglycan synthesis</keyword>
<keyword id="KW-1185">Reference proteome</keyword>
<keyword id="KW-0808">Transferase</keyword>
<comment type="function">
    <text evidence="1">Cell wall formation. Catalyzes the transfer of a GlcNAc subunit on undecaprenyl-pyrophosphoryl-MurNAc-pentapeptide (lipid intermediate I) to form undecaprenyl-pyrophosphoryl-MurNAc-(pentapeptide)GlcNAc (lipid intermediate II).</text>
</comment>
<comment type="catalytic activity">
    <reaction evidence="1">
        <text>di-trans,octa-cis-undecaprenyl diphospho-N-acetyl-alpha-D-muramoyl-L-alanyl-D-glutamyl-meso-2,6-diaminopimeloyl-D-alanyl-D-alanine + UDP-N-acetyl-alpha-D-glucosamine = di-trans,octa-cis-undecaprenyl diphospho-[N-acetyl-alpha-D-glucosaminyl-(1-&gt;4)]-N-acetyl-alpha-D-muramoyl-L-alanyl-D-glutamyl-meso-2,6-diaminopimeloyl-D-alanyl-D-alanine + UDP + H(+)</text>
        <dbReference type="Rhea" id="RHEA:31227"/>
        <dbReference type="ChEBI" id="CHEBI:15378"/>
        <dbReference type="ChEBI" id="CHEBI:57705"/>
        <dbReference type="ChEBI" id="CHEBI:58223"/>
        <dbReference type="ChEBI" id="CHEBI:61387"/>
        <dbReference type="ChEBI" id="CHEBI:61388"/>
        <dbReference type="EC" id="2.4.1.227"/>
    </reaction>
</comment>
<comment type="pathway">
    <text evidence="1">Cell wall biogenesis; peptidoglycan biosynthesis.</text>
</comment>
<comment type="subcellular location">
    <subcellularLocation>
        <location evidence="1">Cell membrane</location>
        <topology evidence="1">Peripheral membrane protein</topology>
        <orientation evidence="1">Cytoplasmic side</orientation>
    </subcellularLocation>
</comment>
<comment type="similarity">
    <text evidence="1">Belongs to the glycosyltransferase 28 family. MurG subfamily.</text>
</comment>
<gene>
    <name evidence="1" type="primary">murG</name>
    <name type="ordered locus">Rxyl_1493</name>
</gene>
<sequence>MAESLRERGAEVVFFGSESGLERELVPKAGFGLHALPLSGLAGGPASRARASLLFARAVVRCRALLRELRPGAVLGVGGYASAPAVAAARLLGIPTFIHEQNSVPGKVNRAAGRFAREVLVAFPDAARRFGRAVRAAHVGMPTRRQFFSASREEALRRLGLEPPVVLVFGGSGGALRINLAAAEAFRGQTPYSVVQISGRRDFPRLSSDNPRHRILEYAEDIWHHVTAADVVVIRGGAGSLFDVAAVGRAAIVVPYPHHRDNQQLLNARYFTERGAAELLPDHEVDAKTLRGRVEELLGDGERRLRMASSMRSLATPRAAEEVAERMLAAGREGTG</sequence>
<reference key="1">
    <citation type="submission" date="2006-06" db="EMBL/GenBank/DDBJ databases">
        <title>Complete sequence of Rubrobacter xylanophilus DSM 9941.</title>
        <authorList>
            <consortium name="US DOE Joint Genome Institute"/>
            <person name="Copeland A."/>
            <person name="Lucas S."/>
            <person name="Lapidus A."/>
            <person name="Barry K."/>
            <person name="Detter J.C."/>
            <person name="Glavina del Rio T."/>
            <person name="Hammon N."/>
            <person name="Israni S."/>
            <person name="Dalin E."/>
            <person name="Tice H."/>
            <person name="Pitluck S."/>
            <person name="Munk A.C."/>
            <person name="Brettin T."/>
            <person name="Bruce D."/>
            <person name="Han C."/>
            <person name="Tapia R."/>
            <person name="Gilna P."/>
            <person name="Schmutz J."/>
            <person name="Larimer F."/>
            <person name="Land M."/>
            <person name="Hauser L."/>
            <person name="Kyrpides N."/>
            <person name="Lykidis A."/>
            <person name="da Costa M.S."/>
            <person name="Rainey F.A."/>
            <person name="Empadinhas N."/>
            <person name="Jolivet E."/>
            <person name="Battista J.R."/>
            <person name="Richardson P."/>
        </authorList>
    </citation>
    <scope>NUCLEOTIDE SEQUENCE [LARGE SCALE GENOMIC DNA]</scope>
    <source>
        <strain>DSM 9941 / JCM 11954 / NBRC 16129 / PRD-1</strain>
    </source>
</reference>
<proteinExistence type="inferred from homology"/>
<organism>
    <name type="scientific">Rubrobacter xylanophilus (strain DSM 9941 / JCM 11954 / NBRC 16129 / PRD-1)</name>
    <dbReference type="NCBI Taxonomy" id="266117"/>
    <lineage>
        <taxon>Bacteria</taxon>
        <taxon>Bacillati</taxon>
        <taxon>Actinomycetota</taxon>
        <taxon>Rubrobacteria</taxon>
        <taxon>Rubrobacterales</taxon>
        <taxon>Rubrobacteraceae</taxon>
        <taxon>Rubrobacter</taxon>
    </lineage>
</organism>
<feature type="chain" id="PRO_0000315160" description="UDP-N-acetylglucosamine--N-acetylmuramyl-(pentapeptide) pyrophosphoryl-undecaprenol N-acetylglucosamine transferase">
    <location>
        <begin position="1"/>
        <end position="336"/>
    </location>
</feature>
<feature type="binding site" evidence="1">
    <location>
        <position position="102"/>
    </location>
    <ligand>
        <name>UDP-N-acetyl-alpha-D-glucosamine</name>
        <dbReference type="ChEBI" id="CHEBI:57705"/>
    </ligand>
</feature>
<feature type="binding site" evidence="1">
    <location>
        <position position="144"/>
    </location>
    <ligand>
        <name>UDP-N-acetyl-alpha-D-glucosamine</name>
        <dbReference type="ChEBI" id="CHEBI:57705"/>
    </ligand>
</feature>
<feature type="binding site" evidence="1">
    <location>
        <position position="172"/>
    </location>
    <ligand>
        <name>UDP-N-acetyl-alpha-D-glucosamine</name>
        <dbReference type="ChEBI" id="CHEBI:57705"/>
    </ligand>
</feature>
<feature type="binding site" evidence="1">
    <location>
        <position position="264"/>
    </location>
    <ligand>
        <name>UDP-N-acetyl-alpha-D-glucosamine</name>
        <dbReference type="ChEBI" id="CHEBI:57705"/>
    </ligand>
</feature>